<comment type="developmental stage">
    <text evidence="2">More than twofold more abundant in the large cell variant (LCV) stage than in the small cell variant (SCV) stage (at protein level). LCVs are more metabolically active than SCVs.</text>
</comment>
<dbReference type="EMBL" id="AE016828">
    <property type="protein sequence ID" value="AAO90475.1"/>
    <property type="molecule type" value="Genomic_DNA"/>
</dbReference>
<dbReference type="RefSeq" id="NP_819961.1">
    <property type="nucleotide sequence ID" value="NC_002971.4"/>
</dbReference>
<dbReference type="RefSeq" id="WP_010957912.1">
    <property type="nucleotide sequence ID" value="NZ_CDBG01000001.1"/>
</dbReference>
<dbReference type="STRING" id="227377.CBU_0952"/>
<dbReference type="EnsemblBacteria" id="AAO90475">
    <property type="protein sequence ID" value="AAO90475"/>
    <property type="gene ID" value="CBU_0952"/>
</dbReference>
<dbReference type="GeneID" id="1208847"/>
<dbReference type="KEGG" id="cbu:CBU_0952"/>
<dbReference type="PATRIC" id="fig|227377.7.peg.945"/>
<dbReference type="eggNOG" id="ENOG5032S07">
    <property type="taxonomic scope" value="Bacteria"/>
</dbReference>
<dbReference type="HOGENOM" id="CLU_079033_0_0_6"/>
<dbReference type="OrthoDB" id="5651111at2"/>
<dbReference type="Proteomes" id="UP000002671">
    <property type="component" value="Chromosome"/>
</dbReference>
<name>Y952_COXBU</name>
<organism>
    <name type="scientific">Coxiella burnetii (strain RSA 493 / Nine Mile phase I)</name>
    <dbReference type="NCBI Taxonomy" id="227377"/>
    <lineage>
        <taxon>Bacteria</taxon>
        <taxon>Pseudomonadati</taxon>
        <taxon>Pseudomonadota</taxon>
        <taxon>Gammaproteobacteria</taxon>
        <taxon>Legionellales</taxon>
        <taxon>Coxiellaceae</taxon>
        <taxon>Coxiella</taxon>
    </lineage>
</organism>
<protein>
    <recommendedName>
        <fullName>Uncharacterized protein CBU_0952</fullName>
    </recommendedName>
</protein>
<accession>Q83CZ8</accession>
<sequence length="227" mass="25952">MKKLTVTFLTFISIFFAATAAFAENRPILNTINYQQQVEKWVTTDSADVMVSVNVTTKEKKFDALQHQVMKKLEELSDGRQWHIDSFSMSQDQSGLEVLSWEVRSRMPLALVNSLRQKIDSLSQAGQQYKIQNVDFEPSLVEKEKAFAELRQRVYDQVKVELDNLNKSFPNGHYFLHSIDFVSPPLYAANQKELTLMRSAPSEKTAVTLGRNLMLIANVKVATFLNK</sequence>
<evidence type="ECO:0000255" key="1"/>
<evidence type="ECO:0000269" key="2">
    <source>
    </source>
</evidence>
<proteinExistence type="evidence at protein level"/>
<reference key="1">
    <citation type="journal article" date="2003" name="Proc. Natl. Acad. Sci. U.S.A.">
        <title>Complete genome sequence of the Q-fever pathogen, Coxiella burnetii.</title>
        <authorList>
            <person name="Seshadri R."/>
            <person name="Paulsen I.T."/>
            <person name="Eisen J.A."/>
            <person name="Read T.D."/>
            <person name="Nelson K.E."/>
            <person name="Nelson W.C."/>
            <person name="Ward N.L."/>
            <person name="Tettelin H."/>
            <person name="Davidsen T.M."/>
            <person name="Beanan M.J."/>
            <person name="DeBoy R.T."/>
            <person name="Daugherty S.C."/>
            <person name="Brinkac L.M."/>
            <person name="Madupu R."/>
            <person name="Dodson R.J."/>
            <person name="Khouri H.M."/>
            <person name="Lee K.H."/>
            <person name="Carty H.A."/>
            <person name="Scanlan D."/>
            <person name="Heinzen R.A."/>
            <person name="Thompson H.A."/>
            <person name="Samuel J.E."/>
            <person name="Fraser C.M."/>
            <person name="Heidelberg J.F."/>
        </authorList>
    </citation>
    <scope>NUCLEOTIDE SEQUENCE [LARGE SCALE GENOMIC DNA]</scope>
    <source>
        <strain>RSA 493 / Nine Mile phase I</strain>
    </source>
</reference>
<reference key="2">
    <citation type="journal article" date="2007" name="Infect. Immun.">
        <title>Proteome and antigen profiling of Coxiella burnetii developmental forms.</title>
        <authorList>
            <person name="Coleman S.A."/>
            <person name="Fischer E.R."/>
            <person name="Cockrell D.C."/>
            <person name="Voth D.E."/>
            <person name="Howe D."/>
            <person name="Mead D.J."/>
            <person name="Samuel J.E."/>
            <person name="Heinzen R.A."/>
        </authorList>
    </citation>
    <scope>IDENTIFICATION BY MASS SPECTROMETRY</scope>
    <scope>DEVELOPMENTAL STAGE</scope>
    <source>
        <strain>Nine Mile Crazy / RSA 514</strain>
    </source>
</reference>
<gene>
    <name type="ordered locus">CBU_0952</name>
</gene>
<keyword id="KW-1185">Reference proteome</keyword>
<keyword id="KW-0732">Signal</keyword>
<feature type="signal peptide" evidence="1">
    <location>
        <begin position="1"/>
        <end position="23"/>
    </location>
</feature>
<feature type="chain" id="PRO_0000324815" description="Uncharacterized protein CBU_0952">
    <location>
        <begin position="24"/>
        <end position="227"/>
    </location>
</feature>